<name>AROC_CHLSY</name>
<gene>
    <name evidence="1" type="primary">aroC</name>
    <name type="ordered locus">Chy400_2720</name>
</gene>
<proteinExistence type="inferred from homology"/>
<protein>
    <recommendedName>
        <fullName evidence="1">Chorismate synthase</fullName>
        <shortName evidence="1">CS</shortName>
        <ecNumber evidence="1">4.2.3.5</ecNumber>
    </recommendedName>
    <alternativeName>
        <fullName evidence="1">5-enolpyruvylshikimate-3-phosphate phospholyase</fullName>
    </alternativeName>
</protein>
<dbReference type="EC" id="4.2.3.5" evidence="1"/>
<dbReference type="EMBL" id="CP001364">
    <property type="protein sequence ID" value="ACM54109.1"/>
    <property type="molecule type" value="Genomic_DNA"/>
</dbReference>
<dbReference type="SMR" id="B9LK59"/>
<dbReference type="KEGG" id="chl:Chy400_2720"/>
<dbReference type="HOGENOM" id="CLU_034547_0_2_0"/>
<dbReference type="OrthoDB" id="9771806at2"/>
<dbReference type="UniPathway" id="UPA00053">
    <property type="reaction ID" value="UER00090"/>
</dbReference>
<dbReference type="GO" id="GO:0005829">
    <property type="term" value="C:cytosol"/>
    <property type="evidence" value="ECO:0007669"/>
    <property type="project" value="TreeGrafter"/>
</dbReference>
<dbReference type="GO" id="GO:0004107">
    <property type="term" value="F:chorismate synthase activity"/>
    <property type="evidence" value="ECO:0007669"/>
    <property type="project" value="UniProtKB-UniRule"/>
</dbReference>
<dbReference type="GO" id="GO:0010181">
    <property type="term" value="F:FMN binding"/>
    <property type="evidence" value="ECO:0007669"/>
    <property type="project" value="TreeGrafter"/>
</dbReference>
<dbReference type="GO" id="GO:0008652">
    <property type="term" value="P:amino acid biosynthetic process"/>
    <property type="evidence" value="ECO:0007669"/>
    <property type="project" value="UniProtKB-KW"/>
</dbReference>
<dbReference type="GO" id="GO:0009073">
    <property type="term" value="P:aromatic amino acid family biosynthetic process"/>
    <property type="evidence" value="ECO:0007669"/>
    <property type="project" value="UniProtKB-KW"/>
</dbReference>
<dbReference type="GO" id="GO:0009423">
    <property type="term" value="P:chorismate biosynthetic process"/>
    <property type="evidence" value="ECO:0007669"/>
    <property type="project" value="UniProtKB-UniRule"/>
</dbReference>
<dbReference type="CDD" id="cd07304">
    <property type="entry name" value="Chorismate_synthase"/>
    <property type="match status" value="1"/>
</dbReference>
<dbReference type="FunFam" id="3.60.150.10:FF:000003">
    <property type="entry name" value="Chorismate synthase"/>
    <property type="match status" value="1"/>
</dbReference>
<dbReference type="Gene3D" id="3.60.150.10">
    <property type="entry name" value="Chorismate synthase AroC"/>
    <property type="match status" value="1"/>
</dbReference>
<dbReference type="HAMAP" id="MF_00300">
    <property type="entry name" value="Chorismate_synth"/>
    <property type="match status" value="1"/>
</dbReference>
<dbReference type="InterPro" id="IPR000453">
    <property type="entry name" value="Chorismate_synth"/>
</dbReference>
<dbReference type="InterPro" id="IPR035904">
    <property type="entry name" value="Chorismate_synth_AroC_sf"/>
</dbReference>
<dbReference type="InterPro" id="IPR020541">
    <property type="entry name" value="Chorismate_synthase_CS"/>
</dbReference>
<dbReference type="NCBIfam" id="TIGR00033">
    <property type="entry name" value="aroC"/>
    <property type="match status" value="1"/>
</dbReference>
<dbReference type="NCBIfam" id="NF003793">
    <property type="entry name" value="PRK05382.1"/>
    <property type="match status" value="1"/>
</dbReference>
<dbReference type="PANTHER" id="PTHR21085">
    <property type="entry name" value="CHORISMATE SYNTHASE"/>
    <property type="match status" value="1"/>
</dbReference>
<dbReference type="PANTHER" id="PTHR21085:SF0">
    <property type="entry name" value="CHORISMATE SYNTHASE"/>
    <property type="match status" value="1"/>
</dbReference>
<dbReference type="Pfam" id="PF01264">
    <property type="entry name" value="Chorismate_synt"/>
    <property type="match status" value="1"/>
</dbReference>
<dbReference type="PIRSF" id="PIRSF001456">
    <property type="entry name" value="Chorismate_synth"/>
    <property type="match status" value="1"/>
</dbReference>
<dbReference type="SUPFAM" id="SSF103263">
    <property type="entry name" value="Chorismate synthase, AroC"/>
    <property type="match status" value="1"/>
</dbReference>
<dbReference type="PROSITE" id="PS00787">
    <property type="entry name" value="CHORISMATE_SYNTHASE_1"/>
    <property type="match status" value="1"/>
</dbReference>
<dbReference type="PROSITE" id="PS00788">
    <property type="entry name" value="CHORISMATE_SYNTHASE_2"/>
    <property type="match status" value="1"/>
</dbReference>
<sequence>MPGNTFGHVFRVTTWGESHGPAVGCTVDGCPAGLPLDVADIQRELDRRRVGQSRVSSQRREADEVQILSGVFEGRTTGTPITMLVYNTDAKSHHYENIKDRYRPGHADYTWDAKYGFRDWRGGGRSSARETIGRVAAGAVARRLLATFGITLVGYTLQLADLRAEVFDEAEIERNIMRCPDARVAALMVERVDQARRELDSLGGIVEVRARGVPPGLGEPVFDKLQADIGKAMFSIPAIKGVEIGEGFGVAMLRGSQNNDPFIRRDDGTIGTVSNHHGGILGGISTGEEIVVRLAAKPPASIAQPQQTVDRDGNPVTIEVHGRHDPTVLPRLVPVAEAMLALVLADHLLRQRLARVTWEDRSDD</sequence>
<evidence type="ECO:0000255" key="1">
    <source>
        <dbReference type="HAMAP-Rule" id="MF_00300"/>
    </source>
</evidence>
<comment type="function">
    <text evidence="1">Catalyzes the anti-1,4-elimination of the C-3 phosphate and the C-6 proR hydrogen from 5-enolpyruvylshikimate-3-phosphate (EPSP) to yield chorismate, which is the branch point compound that serves as the starting substrate for the three terminal pathways of aromatic amino acid biosynthesis. This reaction introduces a second double bond into the aromatic ring system.</text>
</comment>
<comment type="catalytic activity">
    <reaction evidence="1">
        <text>5-O-(1-carboxyvinyl)-3-phosphoshikimate = chorismate + phosphate</text>
        <dbReference type="Rhea" id="RHEA:21020"/>
        <dbReference type="ChEBI" id="CHEBI:29748"/>
        <dbReference type="ChEBI" id="CHEBI:43474"/>
        <dbReference type="ChEBI" id="CHEBI:57701"/>
        <dbReference type="EC" id="4.2.3.5"/>
    </reaction>
</comment>
<comment type="cofactor">
    <cofactor evidence="1">
        <name>FMNH2</name>
        <dbReference type="ChEBI" id="CHEBI:57618"/>
    </cofactor>
    <text evidence="1">Reduced FMN (FMNH(2)).</text>
</comment>
<comment type="pathway">
    <text evidence="1">Metabolic intermediate biosynthesis; chorismate biosynthesis; chorismate from D-erythrose 4-phosphate and phosphoenolpyruvate: step 7/7.</text>
</comment>
<comment type="subunit">
    <text evidence="1">Homotetramer.</text>
</comment>
<comment type="similarity">
    <text evidence="1">Belongs to the chorismate synthase family.</text>
</comment>
<reference key="1">
    <citation type="submission" date="2009-01" db="EMBL/GenBank/DDBJ databases">
        <title>Complete sequence of Chloroflexus sp. Y-400-fl.</title>
        <authorList>
            <consortium name="US DOE Joint Genome Institute"/>
            <person name="Lucas S."/>
            <person name="Copeland A."/>
            <person name="Lapidus A."/>
            <person name="Glavina del Rio T."/>
            <person name="Dalin E."/>
            <person name="Tice H."/>
            <person name="Bruce D."/>
            <person name="Goodwin L."/>
            <person name="Pitluck S."/>
            <person name="Sims D."/>
            <person name="Kiss H."/>
            <person name="Brettin T."/>
            <person name="Detter J.C."/>
            <person name="Han C."/>
            <person name="Larimer F."/>
            <person name="Land M."/>
            <person name="Hauser L."/>
            <person name="Kyrpides N."/>
            <person name="Ovchinnikova G."/>
            <person name="Bryant D.A."/>
            <person name="Richardson P."/>
        </authorList>
    </citation>
    <scope>NUCLEOTIDE SEQUENCE [LARGE SCALE GENOMIC DNA]</scope>
    <source>
        <strain>ATCC 29364 / DSM 637 / Y-400-fl</strain>
    </source>
</reference>
<accession>B9LK59</accession>
<feature type="chain" id="PRO_1000132763" description="Chorismate synthase">
    <location>
        <begin position="1"/>
        <end position="364"/>
    </location>
</feature>
<feature type="binding site" evidence="1">
    <location>
        <position position="48"/>
    </location>
    <ligand>
        <name>NADP(+)</name>
        <dbReference type="ChEBI" id="CHEBI:58349"/>
    </ligand>
</feature>
<feature type="binding site" evidence="1">
    <location>
        <position position="54"/>
    </location>
    <ligand>
        <name>NADP(+)</name>
        <dbReference type="ChEBI" id="CHEBI:58349"/>
    </ligand>
</feature>
<feature type="binding site" evidence="1">
    <location>
        <begin position="125"/>
        <end position="127"/>
    </location>
    <ligand>
        <name>FMN</name>
        <dbReference type="ChEBI" id="CHEBI:58210"/>
    </ligand>
</feature>
<feature type="binding site" evidence="1">
    <location>
        <position position="282"/>
    </location>
    <ligand>
        <name>FMN</name>
        <dbReference type="ChEBI" id="CHEBI:58210"/>
    </ligand>
</feature>
<feature type="binding site" evidence="1">
    <location>
        <begin position="297"/>
        <end position="301"/>
    </location>
    <ligand>
        <name>FMN</name>
        <dbReference type="ChEBI" id="CHEBI:58210"/>
    </ligand>
</feature>
<feature type="binding site" evidence="1">
    <location>
        <position position="323"/>
    </location>
    <ligand>
        <name>FMN</name>
        <dbReference type="ChEBI" id="CHEBI:58210"/>
    </ligand>
</feature>
<keyword id="KW-0028">Amino-acid biosynthesis</keyword>
<keyword id="KW-0057">Aromatic amino acid biosynthesis</keyword>
<keyword id="KW-0274">FAD</keyword>
<keyword id="KW-0285">Flavoprotein</keyword>
<keyword id="KW-0288">FMN</keyword>
<keyword id="KW-0456">Lyase</keyword>
<keyword id="KW-0521">NADP</keyword>
<organism>
    <name type="scientific">Chloroflexus aurantiacus (strain ATCC 29364 / DSM 637 / Y-400-fl)</name>
    <dbReference type="NCBI Taxonomy" id="480224"/>
    <lineage>
        <taxon>Bacteria</taxon>
        <taxon>Bacillati</taxon>
        <taxon>Chloroflexota</taxon>
        <taxon>Chloroflexia</taxon>
        <taxon>Chloroflexales</taxon>
        <taxon>Chloroflexineae</taxon>
        <taxon>Chloroflexaceae</taxon>
        <taxon>Chloroflexus</taxon>
    </lineage>
</organism>